<reference key="1">
    <citation type="submission" date="2007-11" db="EMBL/GenBank/DDBJ databases">
        <title>Complete sequence of Petroga mobilis SJ95.</title>
        <authorList>
            <consortium name="US DOE Joint Genome Institute"/>
            <person name="Copeland A."/>
            <person name="Lucas S."/>
            <person name="Lapidus A."/>
            <person name="Barry K."/>
            <person name="Glavina del Rio T."/>
            <person name="Dalin E."/>
            <person name="Tice H."/>
            <person name="Pitluck S."/>
            <person name="Meincke L."/>
            <person name="Brettin T."/>
            <person name="Bruce D."/>
            <person name="Detter J.C."/>
            <person name="Han C."/>
            <person name="Kuske C.R."/>
            <person name="Schmutz J."/>
            <person name="Larimer F."/>
            <person name="Land M."/>
            <person name="Hauser L."/>
            <person name="Kyrpides N."/>
            <person name="Mikhailova N."/>
            <person name="Noll K."/>
            <person name="Richardson P."/>
        </authorList>
    </citation>
    <scope>NUCLEOTIDE SEQUENCE [LARGE SCALE GENOMIC DNA]</scope>
    <source>
        <strain>DSM 10674 / SJ95</strain>
    </source>
</reference>
<name>RL11_PETMO</name>
<comment type="function">
    <text evidence="1">Forms part of the ribosomal stalk which helps the ribosome interact with GTP-bound translation factors.</text>
</comment>
<comment type="subunit">
    <text evidence="1">Part of the ribosomal stalk of the 50S ribosomal subunit. Interacts with L10 and the large rRNA to form the base of the stalk. L10 forms an elongated spine to which L12 dimers bind in a sequential fashion forming a multimeric L10(L12)X complex.</text>
</comment>
<comment type="PTM">
    <text evidence="1">One or more lysine residues are methylated.</text>
</comment>
<comment type="similarity">
    <text evidence="1">Belongs to the universal ribosomal protein uL11 family.</text>
</comment>
<sequence>MAKKLLRVVKLQLEAGKATPAPPVGPALGQYGVNLMEFCKKFNAATADQAGTLLPVEISVFEDRSFTFIVKTPPASFLVKKAAGLKSGAKEPSKEVVGKIKRKQLREIAETKMQDLNAKDLDAAMKIIAGTARSMGIEIED</sequence>
<keyword id="KW-0488">Methylation</keyword>
<keyword id="KW-0687">Ribonucleoprotein</keyword>
<keyword id="KW-0689">Ribosomal protein</keyword>
<keyword id="KW-0694">RNA-binding</keyword>
<keyword id="KW-0699">rRNA-binding</keyword>
<gene>
    <name evidence="1" type="primary">rplK</name>
    <name type="ordered locus">Pmob_0359</name>
</gene>
<dbReference type="EMBL" id="CP000879">
    <property type="protein sequence ID" value="ABX31101.1"/>
    <property type="molecule type" value="Genomic_DNA"/>
</dbReference>
<dbReference type="RefSeq" id="WP_012208208.1">
    <property type="nucleotide sequence ID" value="NC_010003.1"/>
</dbReference>
<dbReference type="SMR" id="A9BF37"/>
<dbReference type="STRING" id="403833.Pmob_0359"/>
<dbReference type="KEGG" id="pmo:Pmob_0359"/>
<dbReference type="eggNOG" id="COG0080">
    <property type="taxonomic scope" value="Bacteria"/>
</dbReference>
<dbReference type="HOGENOM" id="CLU_074237_2_1_0"/>
<dbReference type="OrthoDB" id="9802408at2"/>
<dbReference type="Proteomes" id="UP000000789">
    <property type="component" value="Chromosome"/>
</dbReference>
<dbReference type="GO" id="GO:0022625">
    <property type="term" value="C:cytosolic large ribosomal subunit"/>
    <property type="evidence" value="ECO:0007669"/>
    <property type="project" value="TreeGrafter"/>
</dbReference>
<dbReference type="GO" id="GO:0070180">
    <property type="term" value="F:large ribosomal subunit rRNA binding"/>
    <property type="evidence" value="ECO:0007669"/>
    <property type="project" value="UniProtKB-UniRule"/>
</dbReference>
<dbReference type="GO" id="GO:0003735">
    <property type="term" value="F:structural constituent of ribosome"/>
    <property type="evidence" value="ECO:0007669"/>
    <property type="project" value="InterPro"/>
</dbReference>
<dbReference type="GO" id="GO:0006412">
    <property type="term" value="P:translation"/>
    <property type="evidence" value="ECO:0007669"/>
    <property type="project" value="UniProtKB-UniRule"/>
</dbReference>
<dbReference type="CDD" id="cd00349">
    <property type="entry name" value="Ribosomal_L11"/>
    <property type="match status" value="1"/>
</dbReference>
<dbReference type="FunFam" id="1.10.10.250:FF:000001">
    <property type="entry name" value="50S ribosomal protein L11"/>
    <property type="match status" value="1"/>
</dbReference>
<dbReference type="FunFam" id="3.30.1550.10:FF:000001">
    <property type="entry name" value="50S ribosomal protein L11"/>
    <property type="match status" value="1"/>
</dbReference>
<dbReference type="Gene3D" id="1.10.10.250">
    <property type="entry name" value="Ribosomal protein L11, C-terminal domain"/>
    <property type="match status" value="1"/>
</dbReference>
<dbReference type="Gene3D" id="3.30.1550.10">
    <property type="entry name" value="Ribosomal protein L11/L12, N-terminal domain"/>
    <property type="match status" value="1"/>
</dbReference>
<dbReference type="HAMAP" id="MF_00736">
    <property type="entry name" value="Ribosomal_uL11"/>
    <property type="match status" value="1"/>
</dbReference>
<dbReference type="InterPro" id="IPR000911">
    <property type="entry name" value="Ribosomal_uL11"/>
</dbReference>
<dbReference type="InterPro" id="IPR006519">
    <property type="entry name" value="Ribosomal_uL11_bac-typ"/>
</dbReference>
<dbReference type="InterPro" id="IPR020783">
    <property type="entry name" value="Ribosomal_uL11_C"/>
</dbReference>
<dbReference type="InterPro" id="IPR036769">
    <property type="entry name" value="Ribosomal_uL11_C_sf"/>
</dbReference>
<dbReference type="InterPro" id="IPR020785">
    <property type="entry name" value="Ribosomal_uL11_CS"/>
</dbReference>
<dbReference type="InterPro" id="IPR020784">
    <property type="entry name" value="Ribosomal_uL11_N"/>
</dbReference>
<dbReference type="InterPro" id="IPR036796">
    <property type="entry name" value="Ribosomal_uL11_N_sf"/>
</dbReference>
<dbReference type="NCBIfam" id="TIGR01632">
    <property type="entry name" value="L11_bact"/>
    <property type="match status" value="1"/>
</dbReference>
<dbReference type="PANTHER" id="PTHR11661">
    <property type="entry name" value="60S RIBOSOMAL PROTEIN L12"/>
    <property type="match status" value="1"/>
</dbReference>
<dbReference type="PANTHER" id="PTHR11661:SF1">
    <property type="entry name" value="LARGE RIBOSOMAL SUBUNIT PROTEIN UL11M"/>
    <property type="match status" value="1"/>
</dbReference>
<dbReference type="Pfam" id="PF00298">
    <property type="entry name" value="Ribosomal_L11"/>
    <property type="match status" value="1"/>
</dbReference>
<dbReference type="Pfam" id="PF03946">
    <property type="entry name" value="Ribosomal_L11_N"/>
    <property type="match status" value="1"/>
</dbReference>
<dbReference type="SMART" id="SM00649">
    <property type="entry name" value="RL11"/>
    <property type="match status" value="1"/>
</dbReference>
<dbReference type="SUPFAM" id="SSF54747">
    <property type="entry name" value="Ribosomal L11/L12e N-terminal domain"/>
    <property type="match status" value="1"/>
</dbReference>
<dbReference type="SUPFAM" id="SSF46906">
    <property type="entry name" value="Ribosomal protein L11, C-terminal domain"/>
    <property type="match status" value="1"/>
</dbReference>
<dbReference type="PROSITE" id="PS00359">
    <property type="entry name" value="RIBOSOMAL_L11"/>
    <property type="match status" value="1"/>
</dbReference>
<protein>
    <recommendedName>
        <fullName evidence="1">Large ribosomal subunit protein uL11</fullName>
    </recommendedName>
    <alternativeName>
        <fullName evidence="2">50S ribosomal protein L11</fullName>
    </alternativeName>
</protein>
<accession>A9BF37</accession>
<proteinExistence type="inferred from homology"/>
<evidence type="ECO:0000255" key="1">
    <source>
        <dbReference type="HAMAP-Rule" id="MF_00736"/>
    </source>
</evidence>
<evidence type="ECO:0000305" key="2"/>
<organism>
    <name type="scientific">Petrotoga mobilis (strain DSM 10674 / SJ95)</name>
    <dbReference type="NCBI Taxonomy" id="403833"/>
    <lineage>
        <taxon>Bacteria</taxon>
        <taxon>Thermotogati</taxon>
        <taxon>Thermotogota</taxon>
        <taxon>Thermotogae</taxon>
        <taxon>Petrotogales</taxon>
        <taxon>Petrotogaceae</taxon>
        <taxon>Petrotoga</taxon>
    </lineage>
</organism>
<feature type="chain" id="PRO_1000083394" description="Large ribosomal subunit protein uL11">
    <location>
        <begin position="1"/>
        <end position="141"/>
    </location>
</feature>